<accession>B4LG58</accession>
<keyword id="KW-0963">Cytoplasm</keyword>
<keyword id="KW-0396">Initiation factor</keyword>
<keyword id="KW-0648">Protein biosynthesis</keyword>
<keyword id="KW-1185">Reference proteome</keyword>
<proteinExistence type="inferred from homology"/>
<dbReference type="EMBL" id="CH940647">
    <property type="protein sequence ID" value="EDW69366.1"/>
    <property type="molecule type" value="Genomic_DNA"/>
</dbReference>
<dbReference type="SMR" id="B4LG58"/>
<dbReference type="FunCoup" id="B4LG58">
    <property type="interactions" value="2524"/>
</dbReference>
<dbReference type="STRING" id="7244.B4LG58"/>
<dbReference type="EnsemblMetazoa" id="FBtr0228082">
    <property type="protein sequence ID" value="FBpp0226574"/>
    <property type="gene ID" value="FBgn0199409"/>
</dbReference>
<dbReference type="EnsemblMetazoa" id="XM_002046988.3">
    <property type="protein sequence ID" value="XP_002047024.1"/>
    <property type="gene ID" value="LOC6622147"/>
</dbReference>
<dbReference type="GeneID" id="6622147"/>
<dbReference type="KEGG" id="dvi:6622147"/>
<dbReference type="CTD" id="3646"/>
<dbReference type="eggNOG" id="KOG2758">
    <property type="taxonomic scope" value="Eukaryota"/>
</dbReference>
<dbReference type="HOGENOM" id="CLU_031132_0_0_1"/>
<dbReference type="InParanoid" id="B4LG58"/>
<dbReference type="OMA" id="NCPWILR"/>
<dbReference type="OrthoDB" id="417252at2759"/>
<dbReference type="PhylomeDB" id="B4LG58"/>
<dbReference type="Proteomes" id="UP000008792">
    <property type="component" value="Unassembled WGS sequence"/>
</dbReference>
<dbReference type="GO" id="GO:0016282">
    <property type="term" value="C:eukaryotic 43S preinitiation complex"/>
    <property type="evidence" value="ECO:0007669"/>
    <property type="project" value="UniProtKB-UniRule"/>
</dbReference>
<dbReference type="GO" id="GO:0033290">
    <property type="term" value="C:eukaryotic 48S preinitiation complex"/>
    <property type="evidence" value="ECO:0007669"/>
    <property type="project" value="UniProtKB-UniRule"/>
</dbReference>
<dbReference type="GO" id="GO:0071540">
    <property type="term" value="C:eukaryotic translation initiation factor 3 complex, eIF3e"/>
    <property type="evidence" value="ECO:0007669"/>
    <property type="project" value="UniProtKB-UniRule"/>
</dbReference>
<dbReference type="GO" id="GO:0043231">
    <property type="term" value="C:intracellular membrane-bounded organelle"/>
    <property type="evidence" value="ECO:0007669"/>
    <property type="project" value="EnsemblMetazoa"/>
</dbReference>
<dbReference type="GO" id="GO:0003743">
    <property type="term" value="F:translation initiation factor activity"/>
    <property type="evidence" value="ECO:0007669"/>
    <property type="project" value="UniProtKB-UniRule"/>
</dbReference>
<dbReference type="GO" id="GO:0001732">
    <property type="term" value="P:formation of cytoplasmic translation initiation complex"/>
    <property type="evidence" value="ECO:0007669"/>
    <property type="project" value="UniProtKB-UniRule"/>
</dbReference>
<dbReference type="CDD" id="cd21378">
    <property type="entry name" value="eIF3E"/>
    <property type="match status" value="1"/>
</dbReference>
<dbReference type="HAMAP" id="MF_03004">
    <property type="entry name" value="eIF3e"/>
    <property type="match status" value="1"/>
</dbReference>
<dbReference type="InterPro" id="IPR016650">
    <property type="entry name" value="eIF3e"/>
</dbReference>
<dbReference type="InterPro" id="IPR019010">
    <property type="entry name" value="eIF3e_N"/>
</dbReference>
<dbReference type="InterPro" id="IPR000717">
    <property type="entry name" value="PCI_dom"/>
</dbReference>
<dbReference type="InterPro" id="IPR036390">
    <property type="entry name" value="WH_DNA-bd_sf"/>
</dbReference>
<dbReference type="PANTHER" id="PTHR10317">
    <property type="entry name" value="EUKARYOTIC TRANSLATION INITIATION FACTOR 3 SUBUNIT E"/>
    <property type="match status" value="1"/>
</dbReference>
<dbReference type="Pfam" id="PF09440">
    <property type="entry name" value="eIF3_N"/>
    <property type="match status" value="1"/>
</dbReference>
<dbReference type="Pfam" id="PF01399">
    <property type="entry name" value="PCI"/>
    <property type="match status" value="1"/>
</dbReference>
<dbReference type="PIRSF" id="PIRSF016255">
    <property type="entry name" value="eIF3e_su6"/>
    <property type="match status" value="1"/>
</dbReference>
<dbReference type="SMART" id="SM01186">
    <property type="entry name" value="eIF3_N"/>
    <property type="match status" value="1"/>
</dbReference>
<dbReference type="SMART" id="SM00088">
    <property type="entry name" value="PINT"/>
    <property type="match status" value="1"/>
</dbReference>
<dbReference type="SUPFAM" id="SSF46785">
    <property type="entry name" value="Winged helix' DNA-binding domain"/>
    <property type="match status" value="1"/>
</dbReference>
<dbReference type="PROSITE" id="PS50250">
    <property type="entry name" value="PCI"/>
    <property type="match status" value="1"/>
</dbReference>
<evidence type="ECO:0000250" key="1">
    <source>
        <dbReference type="UniProtKB" id="O77410"/>
    </source>
</evidence>
<evidence type="ECO:0000255" key="2">
    <source>
        <dbReference type="HAMAP-Rule" id="MF_03004"/>
    </source>
</evidence>
<evidence type="ECO:0000255" key="3">
    <source>
        <dbReference type="PROSITE-ProRule" id="PRU01185"/>
    </source>
</evidence>
<gene>
    <name type="primary">eIF3-S6</name>
    <name type="synonym">Int6</name>
    <name type="ORF">GJ12157</name>
</gene>
<protein>
    <recommendedName>
        <fullName evidence="2">Eukaryotic translation initiation factor 3 subunit E</fullName>
        <shortName evidence="2">eIF3e</shortName>
    </recommendedName>
    <alternativeName>
        <fullName evidence="2">Eukaryotic translation initiation factor 3 subunit 6</fullName>
    </alternativeName>
</protein>
<reference key="1">
    <citation type="journal article" date="2007" name="Nature">
        <title>Evolution of genes and genomes on the Drosophila phylogeny.</title>
        <authorList>
            <consortium name="Drosophila 12 genomes consortium"/>
        </authorList>
    </citation>
    <scope>NUCLEOTIDE SEQUENCE [LARGE SCALE GENOMIC DNA]</scope>
    <source>
        <strain>Tucson 15010-1051.87</strain>
    </source>
</reference>
<name>EIF3E_DROVI</name>
<organism>
    <name type="scientific">Drosophila virilis</name>
    <name type="common">Fruit fly</name>
    <dbReference type="NCBI Taxonomy" id="7244"/>
    <lineage>
        <taxon>Eukaryota</taxon>
        <taxon>Metazoa</taxon>
        <taxon>Ecdysozoa</taxon>
        <taxon>Arthropoda</taxon>
        <taxon>Hexapoda</taxon>
        <taxon>Insecta</taxon>
        <taxon>Pterygota</taxon>
        <taxon>Neoptera</taxon>
        <taxon>Endopterygota</taxon>
        <taxon>Diptera</taxon>
        <taxon>Brachycera</taxon>
        <taxon>Muscomorpha</taxon>
        <taxon>Ephydroidea</taxon>
        <taxon>Drosophilidae</taxon>
        <taxon>Drosophila</taxon>
    </lineage>
</organism>
<comment type="function">
    <text evidence="2">Component of the eukaryotic translation initiation factor 3 (eIF-3) complex, which is involved in protein synthesis of a specialized repertoire of mRNAs and, together with other initiation factors, stimulates binding of mRNA and methionyl-tRNAi to the 40S ribosome. The eIF-3 complex specifically targets and initiates translation of a subset of mRNAs involved in cell proliferation.</text>
</comment>
<comment type="subunit">
    <text evidence="1 2">Component of the eukaryotic translation initiation factor 3 (eIF-3) complex. The eIF-3 complex interacts with pix. Interacts with mxt (By similarity).</text>
</comment>
<comment type="subcellular location">
    <subcellularLocation>
        <location evidence="2">Cytoplasm</location>
    </subcellularLocation>
</comment>
<comment type="similarity">
    <text evidence="2">Belongs to the eIF-3 subunit E family.</text>
</comment>
<sequence length="434" mass="51065">MAQFDLTRINCQYLDRHLTFPLLEFLCGKEIYNQQELLEYILETVNKTNMIDYTMDTRKRLNLSQEMPDELVQRKAEVLATLKQLQNEVAPIMKATDILKNGESMKDSKTFVNALQKDYNFKVEHLESAYKLAKYLYECGNYQESTSYLYFCLIVMSPNDKNYLNVLWGKLAAEILTLNWNTALEDLTRLRDYIDSANFSTIQALQQRTWLIHWSVLVFFNHPKGRDLIIEMFLYKPLYLNAIQTMCPHIMRYLATAVVINRTRRNALKDLIKVIQQESYTYRDPITEFLECLYVNFDFEGARLKLHECQTVILNDFFIVACLNEFVEDARLMIFETFCRIHQCITISMLADKLNMKPNEAECWIVNLIRNARLNAKIDSKLGHVVMGTQPLSPYQQLVEKIDSLSMRSEHLAGLIERKSKQKNQESIDSWKYY</sequence>
<feature type="chain" id="PRO_0000365971" description="Eukaryotic translation initiation factor 3 subunit E">
    <location>
        <begin position="1"/>
        <end position="434"/>
    </location>
</feature>
<feature type="domain" description="PCI" evidence="3">
    <location>
        <begin position="219"/>
        <end position="392"/>
    </location>
</feature>